<reference key="1">
    <citation type="journal article" date="2008" name="J. Bacteriol.">
        <title>Genome sequence of the streptomycin-producing microorganism Streptomyces griseus IFO 13350.</title>
        <authorList>
            <person name="Ohnishi Y."/>
            <person name="Ishikawa J."/>
            <person name="Hara H."/>
            <person name="Suzuki H."/>
            <person name="Ikenoya M."/>
            <person name="Ikeda H."/>
            <person name="Yamashita A."/>
            <person name="Hattori M."/>
            <person name="Horinouchi S."/>
        </authorList>
    </citation>
    <scope>NUCLEOTIDE SEQUENCE [LARGE SCALE GENOMIC DNA]</scope>
    <source>
        <strain>JCM 4626 / CBS 651.72 / NBRC 13350 / KCC S-0626 / ISP 5235</strain>
    </source>
</reference>
<evidence type="ECO:0000255" key="1">
    <source>
        <dbReference type="HAMAP-Rule" id="MF_00394"/>
    </source>
</evidence>
<accession>B1VYZ6</accession>
<gene>
    <name evidence="1" type="primary">gpsA</name>
    <name type="ordered locus">SGR_1922</name>
</gene>
<dbReference type="EC" id="1.1.1.94" evidence="1"/>
<dbReference type="EMBL" id="AP009493">
    <property type="protein sequence ID" value="BAG18751.1"/>
    <property type="molecule type" value="Genomic_DNA"/>
</dbReference>
<dbReference type="RefSeq" id="WP_012378865.1">
    <property type="nucleotide sequence ID" value="NC_010572.1"/>
</dbReference>
<dbReference type="SMR" id="B1VYZ6"/>
<dbReference type="KEGG" id="sgr:SGR_1922"/>
<dbReference type="PATRIC" id="fig|455632.4.peg.1951"/>
<dbReference type="eggNOG" id="COG0240">
    <property type="taxonomic scope" value="Bacteria"/>
</dbReference>
<dbReference type="HOGENOM" id="CLU_033449_0_2_11"/>
<dbReference type="UniPathway" id="UPA00940"/>
<dbReference type="Proteomes" id="UP000001685">
    <property type="component" value="Chromosome"/>
</dbReference>
<dbReference type="GO" id="GO:0005829">
    <property type="term" value="C:cytosol"/>
    <property type="evidence" value="ECO:0007669"/>
    <property type="project" value="TreeGrafter"/>
</dbReference>
<dbReference type="GO" id="GO:0047952">
    <property type="term" value="F:glycerol-3-phosphate dehydrogenase [NAD(P)+] activity"/>
    <property type="evidence" value="ECO:0007669"/>
    <property type="project" value="UniProtKB-UniRule"/>
</dbReference>
<dbReference type="GO" id="GO:0051287">
    <property type="term" value="F:NAD binding"/>
    <property type="evidence" value="ECO:0007669"/>
    <property type="project" value="InterPro"/>
</dbReference>
<dbReference type="GO" id="GO:0005975">
    <property type="term" value="P:carbohydrate metabolic process"/>
    <property type="evidence" value="ECO:0007669"/>
    <property type="project" value="InterPro"/>
</dbReference>
<dbReference type="GO" id="GO:0046167">
    <property type="term" value="P:glycerol-3-phosphate biosynthetic process"/>
    <property type="evidence" value="ECO:0007669"/>
    <property type="project" value="UniProtKB-UniRule"/>
</dbReference>
<dbReference type="GO" id="GO:0046168">
    <property type="term" value="P:glycerol-3-phosphate catabolic process"/>
    <property type="evidence" value="ECO:0007669"/>
    <property type="project" value="InterPro"/>
</dbReference>
<dbReference type="GO" id="GO:0006650">
    <property type="term" value="P:glycerophospholipid metabolic process"/>
    <property type="evidence" value="ECO:0007669"/>
    <property type="project" value="UniProtKB-UniRule"/>
</dbReference>
<dbReference type="GO" id="GO:0008654">
    <property type="term" value="P:phospholipid biosynthetic process"/>
    <property type="evidence" value="ECO:0007669"/>
    <property type="project" value="UniProtKB-KW"/>
</dbReference>
<dbReference type="FunFam" id="1.10.1040.10:FF:000001">
    <property type="entry name" value="Glycerol-3-phosphate dehydrogenase [NAD(P)+]"/>
    <property type="match status" value="1"/>
</dbReference>
<dbReference type="FunFam" id="3.40.50.720:FF:000019">
    <property type="entry name" value="Glycerol-3-phosphate dehydrogenase [NAD(P)+]"/>
    <property type="match status" value="1"/>
</dbReference>
<dbReference type="Gene3D" id="1.10.1040.10">
    <property type="entry name" value="N-(1-d-carboxylethyl)-l-norvaline Dehydrogenase, domain 2"/>
    <property type="match status" value="1"/>
</dbReference>
<dbReference type="Gene3D" id="3.40.50.720">
    <property type="entry name" value="NAD(P)-binding Rossmann-like Domain"/>
    <property type="match status" value="1"/>
</dbReference>
<dbReference type="HAMAP" id="MF_00394">
    <property type="entry name" value="NAD_Glyc3P_dehydrog"/>
    <property type="match status" value="1"/>
</dbReference>
<dbReference type="InterPro" id="IPR008927">
    <property type="entry name" value="6-PGluconate_DH-like_C_sf"/>
</dbReference>
<dbReference type="InterPro" id="IPR013328">
    <property type="entry name" value="6PGD_dom2"/>
</dbReference>
<dbReference type="InterPro" id="IPR006168">
    <property type="entry name" value="G3P_DH_NAD-dep"/>
</dbReference>
<dbReference type="InterPro" id="IPR006109">
    <property type="entry name" value="G3P_DH_NAD-dep_C"/>
</dbReference>
<dbReference type="InterPro" id="IPR011128">
    <property type="entry name" value="G3P_DH_NAD-dep_N"/>
</dbReference>
<dbReference type="InterPro" id="IPR036291">
    <property type="entry name" value="NAD(P)-bd_dom_sf"/>
</dbReference>
<dbReference type="NCBIfam" id="NF000940">
    <property type="entry name" value="PRK00094.1-2"/>
    <property type="match status" value="1"/>
</dbReference>
<dbReference type="NCBIfam" id="NF000942">
    <property type="entry name" value="PRK00094.1-4"/>
    <property type="match status" value="1"/>
</dbReference>
<dbReference type="PANTHER" id="PTHR11728">
    <property type="entry name" value="GLYCEROL-3-PHOSPHATE DEHYDROGENASE"/>
    <property type="match status" value="1"/>
</dbReference>
<dbReference type="PANTHER" id="PTHR11728:SF1">
    <property type="entry name" value="GLYCEROL-3-PHOSPHATE DEHYDROGENASE [NAD(+)] 2, CHLOROPLASTIC"/>
    <property type="match status" value="1"/>
</dbReference>
<dbReference type="Pfam" id="PF07479">
    <property type="entry name" value="NAD_Gly3P_dh_C"/>
    <property type="match status" value="1"/>
</dbReference>
<dbReference type="Pfam" id="PF01210">
    <property type="entry name" value="NAD_Gly3P_dh_N"/>
    <property type="match status" value="1"/>
</dbReference>
<dbReference type="PIRSF" id="PIRSF000114">
    <property type="entry name" value="Glycerol-3-P_dh"/>
    <property type="match status" value="1"/>
</dbReference>
<dbReference type="PRINTS" id="PR00077">
    <property type="entry name" value="GPDHDRGNASE"/>
</dbReference>
<dbReference type="SUPFAM" id="SSF48179">
    <property type="entry name" value="6-phosphogluconate dehydrogenase C-terminal domain-like"/>
    <property type="match status" value="1"/>
</dbReference>
<dbReference type="SUPFAM" id="SSF51735">
    <property type="entry name" value="NAD(P)-binding Rossmann-fold domains"/>
    <property type="match status" value="1"/>
</dbReference>
<dbReference type="PROSITE" id="PS00957">
    <property type="entry name" value="NAD_G3PDH"/>
    <property type="match status" value="1"/>
</dbReference>
<comment type="function">
    <text evidence="1">Catalyzes the reduction of the glycolytic intermediate dihydroxyacetone phosphate (DHAP) to sn-glycerol 3-phosphate (G3P), the key precursor for phospholipid synthesis.</text>
</comment>
<comment type="catalytic activity">
    <reaction evidence="1">
        <text>sn-glycerol 3-phosphate + NAD(+) = dihydroxyacetone phosphate + NADH + H(+)</text>
        <dbReference type="Rhea" id="RHEA:11092"/>
        <dbReference type="ChEBI" id="CHEBI:15378"/>
        <dbReference type="ChEBI" id="CHEBI:57540"/>
        <dbReference type="ChEBI" id="CHEBI:57597"/>
        <dbReference type="ChEBI" id="CHEBI:57642"/>
        <dbReference type="ChEBI" id="CHEBI:57945"/>
        <dbReference type="EC" id="1.1.1.94"/>
    </reaction>
    <physiologicalReaction direction="right-to-left" evidence="1">
        <dbReference type="Rhea" id="RHEA:11094"/>
    </physiologicalReaction>
</comment>
<comment type="catalytic activity">
    <reaction evidence="1">
        <text>sn-glycerol 3-phosphate + NADP(+) = dihydroxyacetone phosphate + NADPH + H(+)</text>
        <dbReference type="Rhea" id="RHEA:11096"/>
        <dbReference type="ChEBI" id="CHEBI:15378"/>
        <dbReference type="ChEBI" id="CHEBI:57597"/>
        <dbReference type="ChEBI" id="CHEBI:57642"/>
        <dbReference type="ChEBI" id="CHEBI:57783"/>
        <dbReference type="ChEBI" id="CHEBI:58349"/>
        <dbReference type="EC" id="1.1.1.94"/>
    </reaction>
    <physiologicalReaction direction="right-to-left" evidence="1">
        <dbReference type="Rhea" id="RHEA:11098"/>
    </physiologicalReaction>
</comment>
<comment type="pathway">
    <text evidence="1">Membrane lipid metabolism; glycerophospholipid metabolism.</text>
</comment>
<comment type="subcellular location">
    <subcellularLocation>
        <location evidence="1">Cytoplasm</location>
    </subcellularLocation>
</comment>
<comment type="similarity">
    <text evidence="1">Belongs to the NAD-dependent glycerol-3-phosphate dehydrogenase family.</text>
</comment>
<keyword id="KW-0963">Cytoplasm</keyword>
<keyword id="KW-0444">Lipid biosynthesis</keyword>
<keyword id="KW-0443">Lipid metabolism</keyword>
<keyword id="KW-0520">NAD</keyword>
<keyword id="KW-0521">NADP</keyword>
<keyword id="KW-0547">Nucleotide-binding</keyword>
<keyword id="KW-0560">Oxidoreductase</keyword>
<keyword id="KW-0594">Phospholipid biosynthesis</keyword>
<keyword id="KW-1208">Phospholipid metabolism</keyword>
<feature type="chain" id="PRO_1000123192" description="Glycerol-3-phosphate dehydrogenase [NAD(P)+]">
    <location>
        <begin position="1"/>
        <end position="336"/>
    </location>
</feature>
<feature type="active site" description="Proton acceptor" evidence="1">
    <location>
        <position position="194"/>
    </location>
</feature>
<feature type="binding site" evidence="1">
    <location>
        <position position="14"/>
    </location>
    <ligand>
        <name>NADPH</name>
        <dbReference type="ChEBI" id="CHEBI:57783"/>
    </ligand>
</feature>
<feature type="binding site" evidence="1">
    <location>
        <position position="15"/>
    </location>
    <ligand>
        <name>NADPH</name>
        <dbReference type="ChEBI" id="CHEBI:57783"/>
    </ligand>
</feature>
<feature type="binding site" evidence="1">
    <location>
        <position position="35"/>
    </location>
    <ligand>
        <name>NADPH</name>
        <dbReference type="ChEBI" id="CHEBI:57783"/>
    </ligand>
</feature>
<feature type="binding site" evidence="1">
    <location>
        <position position="36"/>
    </location>
    <ligand>
        <name>NADPH</name>
        <dbReference type="ChEBI" id="CHEBI:57783"/>
    </ligand>
</feature>
<feature type="binding site" evidence="1">
    <location>
        <position position="109"/>
    </location>
    <ligand>
        <name>NADPH</name>
        <dbReference type="ChEBI" id="CHEBI:57783"/>
    </ligand>
</feature>
<feature type="binding site" evidence="1">
    <location>
        <position position="109"/>
    </location>
    <ligand>
        <name>sn-glycerol 3-phosphate</name>
        <dbReference type="ChEBI" id="CHEBI:57597"/>
    </ligand>
</feature>
<feature type="binding site" evidence="1">
    <location>
        <position position="139"/>
    </location>
    <ligand>
        <name>sn-glycerol 3-phosphate</name>
        <dbReference type="ChEBI" id="CHEBI:57597"/>
    </ligand>
</feature>
<feature type="binding site" evidence="1">
    <location>
        <position position="143"/>
    </location>
    <ligand>
        <name>NADPH</name>
        <dbReference type="ChEBI" id="CHEBI:57783"/>
    </ligand>
</feature>
<feature type="binding site" evidence="1">
    <location>
        <position position="194"/>
    </location>
    <ligand>
        <name>sn-glycerol 3-phosphate</name>
        <dbReference type="ChEBI" id="CHEBI:57597"/>
    </ligand>
</feature>
<feature type="binding site" evidence="1">
    <location>
        <position position="247"/>
    </location>
    <ligand>
        <name>sn-glycerol 3-phosphate</name>
        <dbReference type="ChEBI" id="CHEBI:57597"/>
    </ligand>
</feature>
<feature type="binding site" evidence="1">
    <location>
        <position position="257"/>
    </location>
    <ligand>
        <name>sn-glycerol 3-phosphate</name>
        <dbReference type="ChEBI" id="CHEBI:57597"/>
    </ligand>
</feature>
<feature type="binding site" evidence="1">
    <location>
        <position position="258"/>
    </location>
    <ligand>
        <name>NADPH</name>
        <dbReference type="ChEBI" id="CHEBI:57783"/>
    </ligand>
</feature>
<feature type="binding site" evidence="1">
    <location>
        <position position="258"/>
    </location>
    <ligand>
        <name>sn-glycerol 3-phosphate</name>
        <dbReference type="ChEBI" id="CHEBI:57597"/>
    </ligand>
</feature>
<feature type="binding site" evidence="1">
    <location>
        <position position="259"/>
    </location>
    <ligand>
        <name>sn-glycerol 3-phosphate</name>
        <dbReference type="ChEBI" id="CHEBI:57597"/>
    </ligand>
</feature>
<feature type="binding site" evidence="1">
    <location>
        <position position="284"/>
    </location>
    <ligand>
        <name>NADPH</name>
        <dbReference type="ChEBI" id="CHEBI:57783"/>
    </ligand>
</feature>
<name>GPDA_STRGG</name>
<proteinExistence type="inferred from homology"/>
<organism>
    <name type="scientific">Streptomyces griseus subsp. griseus (strain JCM 4626 / CBS 651.72 / NBRC 13350 / KCC S-0626 / ISP 5235)</name>
    <dbReference type="NCBI Taxonomy" id="455632"/>
    <lineage>
        <taxon>Bacteria</taxon>
        <taxon>Bacillati</taxon>
        <taxon>Actinomycetota</taxon>
        <taxon>Actinomycetes</taxon>
        <taxon>Kitasatosporales</taxon>
        <taxon>Streptomycetaceae</taxon>
        <taxon>Streptomyces</taxon>
    </lineage>
</organism>
<protein>
    <recommendedName>
        <fullName evidence="1">Glycerol-3-phosphate dehydrogenase [NAD(P)+]</fullName>
        <ecNumber evidence="1">1.1.1.94</ecNumber>
    </recommendedName>
    <alternativeName>
        <fullName evidence="1">NAD(P)(+)-dependent glycerol-3-phosphate dehydrogenase</fullName>
    </alternativeName>
    <alternativeName>
        <fullName evidence="1">NAD(P)H-dependent dihydroxyacetone-phosphate reductase</fullName>
    </alternativeName>
</protein>
<sequence>MTHPVKAAVFGTGSWGTAFAVILADAGCEVTLWGRRAEVAEAINTTHTNPDYLPGIALPDSVRATTDAAEALRGADFAFLVVPSQTLRANLADWAPHLEPDTVLVSLMKGVELGTAELMSEVIADVAKVPADRIAVVSGPNLAKEIAERRPAAAVVACADESVAQRLQAACHTSYFRPYTNTDVVGCELGGAVKNVIGLAVGIADGMGLGDNTKGSLITRGLAETTRLGLAMGADPLTFSGLAGLGDLVATCSSPLSRNHTFGTNLGRGMTLQETIAVTKQTAEGVKSCESVLDLARRHGVDMPITETVVSIVHEGKSPVVAVKELMSRSAKPERR</sequence>